<accession>Q1GY95</accession>
<name>UPPP_METFK</name>
<evidence type="ECO:0000255" key="1">
    <source>
        <dbReference type="HAMAP-Rule" id="MF_01006"/>
    </source>
</evidence>
<reference key="1">
    <citation type="submission" date="2006-03" db="EMBL/GenBank/DDBJ databases">
        <title>Complete sequence of Methylobacillus flagellatus KT.</title>
        <authorList>
            <consortium name="US DOE Joint Genome Institute"/>
            <person name="Copeland A."/>
            <person name="Lucas S."/>
            <person name="Lapidus A."/>
            <person name="Barry K."/>
            <person name="Detter J.C."/>
            <person name="Glavina del Rio T."/>
            <person name="Hammon N."/>
            <person name="Israni S."/>
            <person name="Dalin E."/>
            <person name="Tice H."/>
            <person name="Pitluck S."/>
            <person name="Brettin T."/>
            <person name="Bruce D."/>
            <person name="Han C."/>
            <person name="Tapia R."/>
            <person name="Saunders E."/>
            <person name="Gilna P."/>
            <person name="Schmutz J."/>
            <person name="Larimer F."/>
            <person name="Land M."/>
            <person name="Kyrpides N."/>
            <person name="Anderson I."/>
            <person name="Richardson P."/>
        </authorList>
    </citation>
    <scope>NUCLEOTIDE SEQUENCE [LARGE SCALE GENOMIC DNA]</scope>
    <source>
        <strain>ATCC 51484 / DSM 6875 / VKM B-1610 / KT</strain>
    </source>
</reference>
<keyword id="KW-0046">Antibiotic resistance</keyword>
<keyword id="KW-0997">Cell inner membrane</keyword>
<keyword id="KW-1003">Cell membrane</keyword>
<keyword id="KW-0133">Cell shape</keyword>
<keyword id="KW-0961">Cell wall biogenesis/degradation</keyword>
<keyword id="KW-0378">Hydrolase</keyword>
<keyword id="KW-0472">Membrane</keyword>
<keyword id="KW-0573">Peptidoglycan synthesis</keyword>
<keyword id="KW-1185">Reference proteome</keyword>
<keyword id="KW-0812">Transmembrane</keyword>
<keyword id="KW-1133">Transmembrane helix</keyword>
<dbReference type="EC" id="3.6.1.27" evidence="1"/>
<dbReference type="EMBL" id="CP000284">
    <property type="protein sequence ID" value="ABE50792.1"/>
    <property type="molecule type" value="Genomic_DNA"/>
</dbReference>
<dbReference type="RefSeq" id="WP_011480745.1">
    <property type="nucleotide sequence ID" value="NC_007947.1"/>
</dbReference>
<dbReference type="SMR" id="Q1GY95"/>
<dbReference type="STRING" id="265072.Mfla_2527"/>
<dbReference type="KEGG" id="mfa:Mfla_2527"/>
<dbReference type="eggNOG" id="COG1968">
    <property type="taxonomic scope" value="Bacteria"/>
</dbReference>
<dbReference type="HOGENOM" id="CLU_060296_2_0_4"/>
<dbReference type="OrthoDB" id="9808289at2"/>
<dbReference type="Proteomes" id="UP000002440">
    <property type="component" value="Chromosome"/>
</dbReference>
<dbReference type="GO" id="GO:0005886">
    <property type="term" value="C:plasma membrane"/>
    <property type="evidence" value="ECO:0007669"/>
    <property type="project" value="UniProtKB-SubCell"/>
</dbReference>
<dbReference type="GO" id="GO:0050380">
    <property type="term" value="F:undecaprenyl-diphosphatase activity"/>
    <property type="evidence" value="ECO:0007669"/>
    <property type="project" value="UniProtKB-UniRule"/>
</dbReference>
<dbReference type="GO" id="GO:0071555">
    <property type="term" value="P:cell wall organization"/>
    <property type="evidence" value="ECO:0007669"/>
    <property type="project" value="UniProtKB-KW"/>
</dbReference>
<dbReference type="GO" id="GO:0009252">
    <property type="term" value="P:peptidoglycan biosynthetic process"/>
    <property type="evidence" value="ECO:0007669"/>
    <property type="project" value="UniProtKB-KW"/>
</dbReference>
<dbReference type="GO" id="GO:0008360">
    <property type="term" value="P:regulation of cell shape"/>
    <property type="evidence" value="ECO:0007669"/>
    <property type="project" value="UniProtKB-KW"/>
</dbReference>
<dbReference type="GO" id="GO:0046677">
    <property type="term" value="P:response to antibiotic"/>
    <property type="evidence" value="ECO:0007669"/>
    <property type="project" value="UniProtKB-UniRule"/>
</dbReference>
<dbReference type="HAMAP" id="MF_01006">
    <property type="entry name" value="Undec_diphosphatase"/>
    <property type="match status" value="1"/>
</dbReference>
<dbReference type="InterPro" id="IPR003824">
    <property type="entry name" value="UppP"/>
</dbReference>
<dbReference type="NCBIfam" id="NF001389">
    <property type="entry name" value="PRK00281.1-2"/>
    <property type="match status" value="1"/>
</dbReference>
<dbReference type="NCBIfam" id="NF001390">
    <property type="entry name" value="PRK00281.1-4"/>
    <property type="match status" value="1"/>
</dbReference>
<dbReference type="NCBIfam" id="TIGR00753">
    <property type="entry name" value="undec_PP_bacA"/>
    <property type="match status" value="1"/>
</dbReference>
<dbReference type="PANTHER" id="PTHR30622">
    <property type="entry name" value="UNDECAPRENYL-DIPHOSPHATASE"/>
    <property type="match status" value="1"/>
</dbReference>
<dbReference type="PANTHER" id="PTHR30622:SF3">
    <property type="entry name" value="UNDECAPRENYL-DIPHOSPHATASE"/>
    <property type="match status" value="1"/>
</dbReference>
<dbReference type="Pfam" id="PF02673">
    <property type="entry name" value="BacA"/>
    <property type="match status" value="1"/>
</dbReference>
<feature type="chain" id="PRO_0000250244" description="Undecaprenyl-diphosphatase">
    <location>
        <begin position="1"/>
        <end position="269"/>
    </location>
</feature>
<feature type="transmembrane region" description="Helical" evidence="1">
    <location>
        <begin position="43"/>
        <end position="63"/>
    </location>
</feature>
<feature type="transmembrane region" description="Helical" evidence="1">
    <location>
        <begin position="82"/>
        <end position="102"/>
    </location>
</feature>
<feature type="transmembrane region" description="Helical" evidence="1">
    <location>
        <begin position="108"/>
        <end position="128"/>
    </location>
</feature>
<feature type="transmembrane region" description="Helical" evidence="1">
    <location>
        <begin position="188"/>
        <end position="208"/>
    </location>
</feature>
<feature type="transmembrane region" description="Helical" evidence="1">
    <location>
        <begin position="222"/>
        <end position="242"/>
    </location>
</feature>
<feature type="transmembrane region" description="Helical" evidence="1">
    <location>
        <begin position="249"/>
        <end position="269"/>
    </location>
</feature>
<sequence length="269" mass="29518">MDILLLLKAFILGIIEGATEFLPISSTGHLIIVGDLLDFNDDKGKVFEIVIQLGAILAVCWEYRSRLISVATTLHTNTSQRFILNLFVAFLPAAIFGLLLHGFIKEHLFSSITVACALIVGGFAILLVENLYAHDKAPAAKASNLNEITPWQALKVGCAQSLAIMPGVSRSGATILGGMIFGLNRKTATEFSFFLAIPVMLAATFYDVYKNFSLFVFEDLAMFAVGFITAFLAALVAIKTLIRYVANHDFKGFAYYRIVLGIIVLAYYW</sequence>
<organism>
    <name type="scientific">Methylobacillus flagellatus (strain ATCC 51484 / DSM 6875 / VKM B-1610 / KT)</name>
    <dbReference type="NCBI Taxonomy" id="265072"/>
    <lineage>
        <taxon>Bacteria</taxon>
        <taxon>Pseudomonadati</taxon>
        <taxon>Pseudomonadota</taxon>
        <taxon>Betaproteobacteria</taxon>
        <taxon>Nitrosomonadales</taxon>
        <taxon>Methylophilaceae</taxon>
        <taxon>Methylobacillus</taxon>
    </lineage>
</organism>
<gene>
    <name evidence="1" type="primary">uppP</name>
    <name type="ordered locus">Mfla_2527</name>
</gene>
<comment type="function">
    <text evidence="1">Catalyzes the dephosphorylation of undecaprenyl diphosphate (UPP). Confers resistance to bacitracin.</text>
</comment>
<comment type="catalytic activity">
    <reaction evidence="1">
        <text>di-trans,octa-cis-undecaprenyl diphosphate + H2O = di-trans,octa-cis-undecaprenyl phosphate + phosphate + H(+)</text>
        <dbReference type="Rhea" id="RHEA:28094"/>
        <dbReference type="ChEBI" id="CHEBI:15377"/>
        <dbReference type="ChEBI" id="CHEBI:15378"/>
        <dbReference type="ChEBI" id="CHEBI:43474"/>
        <dbReference type="ChEBI" id="CHEBI:58405"/>
        <dbReference type="ChEBI" id="CHEBI:60392"/>
        <dbReference type="EC" id="3.6.1.27"/>
    </reaction>
</comment>
<comment type="subcellular location">
    <subcellularLocation>
        <location evidence="1">Cell inner membrane</location>
        <topology evidence="1">Multi-pass membrane protein</topology>
    </subcellularLocation>
</comment>
<comment type="miscellaneous">
    <text>Bacitracin is thought to be involved in the inhibition of peptidoglycan synthesis by sequestering undecaprenyl diphosphate, thereby reducing the pool of lipid carrier available.</text>
</comment>
<comment type="similarity">
    <text evidence="1">Belongs to the UppP family.</text>
</comment>
<protein>
    <recommendedName>
        <fullName evidence="1">Undecaprenyl-diphosphatase</fullName>
        <ecNumber evidence="1">3.6.1.27</ecNumber>
    </recommendedName>
    <alternativeName>
        <fullName evidence="1">Bacitracin resistance protein</fullName>
    </alternativeName>
    <alternativeName>
        <fullName evidence="1">Undecaprenyl pyrophosphate phosphatase</fullName>
    </alternativeName>
</protein>
<proteinExistence type="inferred from homology"/>